<evidence type="ECO:0000255" key="1">
    <source>
        <dbReference type="HAMAP-Rule" id="MF_01703"/>
    </source>
</evidence>
<evidence type="ECO:0000269" key="2">
    <source>
    </source>
</evidence>
<evidence type="ECO:0000305" key="3">
    <source>
    </source>
</evidence>
<evidence type="ECO:0007744" key="4">
    <source>
        <dbReference type="PDB" id="3B5X"/>
    </source>
</evidence>
<comment type="function">
    <text evidence="1 2">Involved in lipopolysaccharide (LPS) biosynthesis. Translocates lipid A-core from the inner to the outer leaflet of the inner membrane. Transmembrane domains (TMD) form a pore in the inner membrane and the ATP-binding domain (NBD) is responsible for energy generation (By similarity). Shows ATPase activity (PubMed:18024585).</text>
</comment>
<comment type="catalytic activity">
    <reaction evidence="1">
        <text>ATP + H2O + lipid A-core oligosaccharideSide 1 = ADP + phosphate + lipid A-core oligosaccharideSide 2.</text>
        <dbReference type="EC" id="7.5.2.6"/>
    </reaction>
</comment>
<comment type="subunit">
    <text evidence="1 2">Homodimer.</text>
</comment>
<comment type="interaction">
    <interactant intactId="EBI-15671160">
        <id>Q9KQW9</id>
    </interactant>
    <interactant intactId="EBI-15671160">
        <id>Q9KQW9</id>
        <label>msbA</label>
    </interactant>
    <organismsDiffer>false</organismsDiffer>
    <experiments>2</experiments>
</comment>
<comment type="subcellular location">
    <subcellularLocation>
        <location evidence="1">Cell inner membrane</location>
        <topology evidence="1">Multi-pass membrane protein</topology>
    </subcellularLocation>
</comment>
<comment type="domain">
    <text evidence="1 2">In MsbA the ATP-binding domain (NBD) and the transmembrane domain (TMD) are fused.</text>
</comment>
<comment type="similarity">
    <text evidence="1">Belongs to the ABC transporter superfamily. Lipid exporter (TC 3.A.1.106) family.</text>
</comment>
<gene>
    <name evidence="1" type="primary">msbA</name>
    <name type="ordered locus">VC_1878</name>
</gene>
<name>MSBA_VIBCH</name>
<protein>
    <recommendedName>
        <fullName evidence="1">ATP-dependent lipid A-core flippase</fullName>
        <ecNumber evidence="1">7.5.2.6</ecNumber>
    </recommendedName>
    <alternativeName>
        <fullName evidence="1">Lipid A export ATP-binding/permease protein MsbA</fullName>
    </alternativeName>
</protein>
<dbReference type="EC" id="7.5.2.6" evidence="1"/>
<dbReference type="EMBL" id="AE003852">
    <property type="protein sequence ID" value="AAF95026.1"/>
    <property type="molecule type" value="Genomic_DNA"/>
</dbReference>
<dbReference type="PIR" id="D82146">
    <property type="entry name" value="D82146"/>
</dbReference>
<dbReference type="RefSeq" id="NP_231512.1">
    <property type="nucleotide sequence ID" value="NC_002505.1"/>
</dbReference>
<dbReference type="RefSeq" id="WP_000052153.1">
    <property type="nucleotide sequence ID" value="NZ_LT906614.1"/>
</dbReference>
<dbReference type="PDB" id="3B5X">
    <property type="method" value="X-ray"/>
    <property type="resolution" value="5.50 A"/>
    <property type="chains" value="A/B=1-582"/>
</dbReference>
<dbReference type="PDBsum" id="3B5X"/>
<dbReference type="SMR" id="Q9KQW9"/>
<dbReference type="DIP" id="DIP-46176N"/>
<dbReference type="STRING" id="243277.VC_1878"/>
<dbReference type="DNASU" id="2613632"/>
<dbReference type="EnsemblBacteria" id="AAF95026">
    <property type="protein sequence ID" value="AAF95026"/>
    <property type="gene ID" value="VC_1878"/>
</dbReference>
<dbReference type="KEGG" id="vch:VC_1878"/>
<dbReference type="PATRIC" id="fig|243277.26.peg.1794"/>
<dbReference type="eggNOG" id="COG1132">
    <property type="taxonomic scope" value="Bacteria"/>
</dbReference>
<dbReference type="HOGENOM" id="CLU_000604_84_3_6"/>
<dbReference type="BRENDA" id="7.5.2.5">
    <property type="organism ID" value="6626"/>
</dbReference>
<dbReference type="EvolutionaryTrace" id="Q9KQW9"/>
<dbReference type="Proteomes" id="UP000000584">
    <property type="component" value="Chromosome 1"/>
</dbReference>
<dbReference type="GO" id="GO:0005886">
    <property type="term" value="C:plasma membrane"/>
    <property type="evidence" value="ECO:0007669"/>
    <property type="project" value="UniProtKB-SubCell"/>
</dbReference>
<dbReference type="GO" id="GO:0140359">
    <property type="term" value="F:ABC-type transporter activity"/>
    <property type="evidence" value="ECO:0007669"/>
    <property type="project" value="InterPro"/>
</dbReference>
<dbReference type="GO" id="GO:0005524">
    <property type="term" value="F:ATP binding"/>
    <property type="evidence" value="ECO:0007669"/>
    <property type="project" value="UniProtKB-KW"/>
</dbReference>
<dbReference type="GO" id="GO:0016887">
    <property type="term" value="F:ATP hydrolysis activity"/>
    <property type="evidence" value="ECO:0007669"/>
    <property type="project" value="InterPro"/>
</dbReference>
<dbReference type="GO" id="GO:0034040">
    <property type="term" value="F:ATPase-coupled lipid transmembrane transporter activity"/>
    <property type="evidence" value="ECO:0000318"/>
    <property type="project" value="GO_Central"/>
</dbReference>
<dbReference type="GO" id="GO:0042802">
    <property type="term" value="F:identical protein binding"/>
    <property type="evidence" value="ECO:0000353"/>
    <property type="project" value="IntAct"/>
</dbReference>
<dbReference type="GO" id="GO:0055085">
    <property type="term" value="P:transmembrane transport"/>
    <property type="evidence" value="ECO:0000318"/>
    <property type="project" value="GO_Central"/>
</dbReference>
<dbReference type="CDD" id="cd18552">
    <property type="entry name" value="ABC_6TM_MsbA_like"/>
    <property type="match status" value="1"/>
</dbReference>
<dbReference type="CDD" id="cd03251">
    <property type="entry name" value="ABCC_MsbA"/>
    <property type="match status" value="1"/>
</dbReference>
<dbReference type="FunFam" id="1.20.1560.10:FF:000008">
    <property type="entry name" value="Lipid A export ATP-binding/permease protein MsbA"/>
    <property type="match status" value="1"/>
</dbReference>
<dbReference type="FunFam" id="3.40.50.300:FF:000140">
    <property type="entry name" value="Lipid A export ATP-binding/permease protein MsbA"/>
    <property type="match status" value="1"/>
</dbReference>
<dbReference type="Gene3D" id="1.20.1560.10">
    <property type="entry name" value="ABC transporter type 1, transmembrane domain"/>
    <property type="match status" value="1"/>
</dbReference>
<dbReference type="Gene3D" id="3.40.50.300">
    <property type="entry name" value="P-loop containing nucleotide triphosphate hydrolases"/>
    <property type="match status" value="1"/>
</dbReference>
<dbReference type="InterPro" id="IPR003593">
    <property type="entry name" value="AAA+_ATPase"/>
</dbReference>
<dbReference type="InterPro" id="IPR011527">
    <property type="entry name" value="ABC1_TM_dom"/>
</dbReference>
<dbReference type="InterPro" id="IPR036640">
    <property type="entry name" value="ABC1_TM_sf"/>
</dbReference>
<dbReference type="InterPro" id="IPR003439">
    <property type="entry name" value="ABC_transporter-like_ATP-bd"/>
</dbReference>
<dbReference type="InterPro" id="IPR017871">
    <property type="entry name" value="ABC_transporter-like_CS"/>
</dbReference>
<dbReference type="InterPro" id="IPR011917">
    <property type="entry name" value="ABC_transpr_lipidA"/>
</dbReference>
<dbReference type="InterPro" id="IPR027417">
    <property type="entry name" value="P-loop_NTPase"/>
</dbReference>
<dbReference type="InterPro" id="IPR039421">
    <property type="entry name" value="Type_1_exporter"/>
</dbReference>
<dbReference type="NCBIfam" id="TIGR02203">
    <property type="entry name" value="MsbA_lipidA"/>
    <property type="match status" value="1"/>
</dbReference>
<dbReference type="NCBIfam" id="NF008381">
    <property type="entry name" value="PRK11176.1"/>
    <property type="match status" value="1"/>
</dbReference>
<dbReference type="PANTHER" id="PTHR43394:SF1">
    <property type="entry name" value="ATP-BINDING CASSETTE SUB-FAMILY B MEMBER 10, MITOCHONDRIAL"/>
    <property type="match status" value="1"/>
</dbReference>
<dbReference type="PANTHER" id="PTHR43394">
    <property type="entry name" value="ATP-DEPENDENT PERMEASE MDL1, MITOCHONDRIAL"/>
    <property type="match status" value="1"/>
</dbReference>
<dbReference type="Pfam" id="PF00664">
    <property type="entry name" value="ABC_membrane"/>
    <property type="match status" value="1"/>
</dbReference>
<dbReference type="Pfam" id="PF00005">
    <property type="entry name" value="ABC_tran"/>
    <property type="match status" value="1"/>
</dbReference>
<dbReference type="SMART" id="SM00382">
    <property type="entry name" value="AAA"/>
    <property type="match status" value="1"/>
</dbReference>
<dbReference type="SUPFAM" id="SSF90123">
    <property type="entry name" value="ABC transporter transmembrane region"/>
    <property type="match status" value="1"/>
</dbReference>
<dbReference type="SUPFAM" id="SSF52540">
    <property type="entry name" value="P-loop containing nucleoside triphosphate hydrolases"/>
    <property type="match status" value="1"/>
</dbReference>
<dbReference type="PROSITE" id="PS50929">
    <property type="entry name" value="ABC_TM1F"/>
    <property type="match status" value="1"/>
</dbReference>
<dbReference type="PROSITE" id="PS00211">
    <property type="entry name" value="ABC_TRANSPORTER_1"/>
    <property type="match status" value="1"/>
</dbReference>
<dbReference type="PROSITE" id="PS50893">
    <property type="entry name" value="ABC_TRANSPORTER_2"/>
    <property type="match status" value="1"/>
</dbReference>
<dbReference type="PROSITE" id="PS51239">
    <property type="entry name" value="MSBA"/>
    <property type="match status" value="1"/>
</dbReference>
<organism>
    <name type="scientific">Vibrio cholerae serotype O1 (strain ATCC 39315 / El Tor Inaba N16961)</name>
    <dbReference type="NCBI Taxonomy" id="243277"/>
    <lineage>
        <taxon>Bacteria</taxon>
        <taxon>Pseudomonadati</taxon>
        <taxon>Pseudomonadota</taxon>
        <taxon>Gammaproteobacteria</taxon>
        <taxon>Vibrionales</taxon>
        <taxon>Vibrionaceae</taxon>
        <taxon>Vibrio</taxon>
    </lineage>
</organism>
<sequence>MSLHSDESNWQTFKRLWTYIRLYKAGLVVSTIALVINAAADTYMISLLKPLLDEGFGNAESNFLRILPFMILGLMFVRGLSGFASSYCLSWVSGNVVMQMRRRLFNHFMHMPVRFFDQESTGGLLSRITYDSEQVAGATSRALVSIVREGASIIGLLTLMFWNSWQLSLVLIVVAPVVAFAISFVSKRFRKISRNMQTAMGHVTSSAEQMLKGHKVVLSYGGQEVERKRFDKVSNSMRQQTMKLVSAQSIADPVIQMIASLALFAVLFLASVDSIRAELTPGTFTVVFSAMFGLMRPLKALTSVTSEFQRGMAACQTLFGLMDLETERDNGKYEAERVNGEVDVKDVTFTYQGKEKPALSHVSFSIPQGKTVALVGRSGSGKSTIANLFTRFYDVDSGSICLDGHDVRDYKLTNLRRHFALVSQNVHLFNDTIANNIAYAAEGEYTREQIEQAARQAHAMEFIENMPQGLDTVIGENGTSLSGGQRQRVAIARALLRDAPVLILDEATSALDTESERAIQAALDELQKNKTVLVIAHRLSTIEQADEILVVDEGEIIERGRHADLLAQDGAYAQLHRIQFGE</sequence>
<keyword id="KW-0002">3D-structure</keyword>
<keyword id="KW-0067">ATP-binding</keyword>
<keyword id="KW-0997">Cell inner membrane</keyword>
<keyword id="KW-1003">Cell membrane</keyword>
<keyword id="KW-0445">Lipid transport</keyword>
<keyword id="KW-0472">Membrane</keyword>
<keyword id="KW-0547">Nucleotide-binding</keyword>
<keyword id="KW-1185">Reference proteome</keyword>
<keyword id="KW-1278">Translocase</keyword>
<keyword id="KW-0812">Transmembrane</keyword>
<keyword id="KW-1133">Transmembrane helix</keyword>
<keyword id="KW-0813">Transport</keyword>
<feature type="chain" id="PRO_0000092601" description="ATP-dependent lipid A-core flippase">
    <location>
        <begin position="1"/>
        <end position="582"/>
    </location>
</feature>
<feature type="transmembrane region" description="Helical" evidence="3">
    <location>
        <begin position="27"/>
        <end position="48"/>
    </location>
</feature>
<feature type="transmembrane region" description="Helical" evidence="3">
    <location>
        <begin position="63"/>
        <end position="85"/>
    </location>
</feature>
<feature type="transmembrane region" description="Helical" evidence="3">
    <location>
        <begin position="144"/>
        <end position="168"/>
    </location>
</feature>
<feature type="transmembrane region" description="Helical" evidence="3">
    <location>
        <begin position="170"/>
        <end position="188"/>
    </location>
</feature>
<feature type="transmembrane region" description="Helical" evidence="3">
    <location>
        <begin position="244"/>
        <end position="266"/>
    </location>
</feature>
<feature type="transmembrane region" description="Helical" evidence="3">
    <location>
        <begin position="283"/>
        <end position="302"/>
    </location>
</feature>
<feature type="domain" description="ABC transmembrane type-1" evidence="1">
    <location>
        <begin position="28"/>
        <end position="310"/>
    </location>
</feature>
<feature type="domain" description="ABC transporter" evidence="1">
    <location>
        <begin position="342"/>
        <end position="578"/>
    </location>
</feature>
<feature type="binding site" evidence="1">
    <location>
        <begin position="376"/>
        <end position="383"/>
    </location>
    <ligand>
        <name>ATP</name>
        <dbReference type="ChEBI" id="CHEBI:30616"/>
    </ligand>
</feature>
<accession>Q9KQW9</accession>
<reference key="1">
    <citation type="journal article" date="2000" name="Nature">
        <title>DNA sequence of both chromosomes of the cholera pathogen Vibrio cholerae.</title>
        <authorList>
            <person name="Heidelberg J.F."/>
            <person name="Eisen J.A."/>
            <person name="Nelson W.C."/>
            <person name="Clayton R.A."/>
            <person name="Gwinn M.L."/>
            <person name="Dodson R.J."/>
            <person name="Haft D.H."/>
            <person name="Hickey E.K."/>
            <person name="Peterson J.D."/>
            <person name="Umayam L.A."/>
            <person name="Gill S.R."/>
            <person name="Nelson K.E."/>
            <person name="Read T.D."/>
            <person name="Tettelin H."/>
            <person name="Richardson D.L."/>
            <person name="Ermolaeva M.D."/>
            <person name="Vamathevan J.J."/>
            <person name="Bass S."/>
            <person name="Qin H."/>
            <person name="Dragoi I."/>
            <person name="Sellers P."/>
            <person name="McDonald L.A."/>
            <person name="Utterback T.R."/>
            <person name="Fleischmann R.D."/>
            <person name="Nierman W.C."/>
            <person name="White O."/>
            <person name="Salzberg S.L."/>
            <person name="Smith H.O."/>
            <person name="Colwell R.R."/>
            <person name="Mekalanos J.J."/>
            <person name="Venter J.C."/>
            <person name="Fraser C.M."/>
        </authorList>
    </citation>
    <scope>NUCLEOTIDE SEQUENCE [LARGE SCALE GENOMIC DNA]</scope>
    <source>
        <strain>ATCC 39315 / El Tor Inaba N16961</strain>
    </source>
</reference>
<reference key="2">
    <citation type="journal article" date="2003" name="J. Mol. Biol.">
        <title>Structure of MsbA from Vibrio cholera: a multidrug resistance ABC transporter homolog in a closed conformation.</title>
        <authorList>
            <person name="Chang G."/>
        </authorList>
    </citation>
    <scope>RETRACTED PAPER</scope>
    <source>
        <strain>ATCC 39315 / El Tor Inaba N16961</strain>
    </source>
</reference>
<reference key="3">
    <citation type="journal article" date="2007" name="J. Mol. Biol.">
        <authorList>
            <person name="Chang G."/>
        </authorList>
    </citation>
    <scope>RETRACTION NOTICE OF PUBMED:12823979</scope>
</reference>
<reference evidence="4" key="4">
    <citation type="journal article" date="2007" name="Proc. Natl. Acad. Sci. U.S.A.">
        <title>Flexibility in the ABC transporter MsbA: Alternating access with a twist.</title>
        <authorList>
            <person name="Ward A."/>
            <person name="Reyes C.L."/>
            <person name="Yu J."/>
            <person name="Roth C.B."/>
            <person name="Chang G."/>
        </authorList>
    </citation>
    <scope>X-RAY CRYSTALLOGRAPHY (5.50 ANGSTROMS)</scope>
    <scope>ATPASE ACTIVITY</scope>
    <scope>SUBUNIT</scope>
    <scope>DOMAIN</scope>
</reference>
<proteinExistence type="evidence at protein level"/>